<sequence length="557" mass="60747">MTDNNKYRDVEIRAPRGNKLTAKSWLTEAPLRMLMNNLDPQVAENPKELVVYGGIGRAARNWACYDKIVETLTRLEDDETLLVQSGKPVGVFKTHSNAPRVLIANSNLVPHWANWEHFNELDAKGLAMYGQMTAGSWIYIGSQGIVQGTYETFVEAGRQHYGGSLKGKWVLTAGLGGMGGAQPLAATLAGACSLNIECQQSRIDFRLETRYVDEQAKDLDDALARIAKYTAEGKAISIALHGNAAEVLPELVKRGVRPDMVTDQTSAHDPLNGYLPVGWTWEQYRDRAQTEPAAVVKAAKQSMAVHVQAMLDFQKQGIPTFDYGNNIRQMAKEEGVANAFDFPGFVPAYIRPLFCRGVGPFRWAALSGEAEDIYKTDAKVKELIPDDAHLHRWLDMARERISFQGLPARICWVGLGLRAKLGLAFNEMVRSGELSAPIVIGRDHLDSGSVSSPNRETESMRDGSDAVSDWPLLNALLNTASGATWVSLHHGGGVGMGFSQHSGMVIVCDGTDEAAARIARVLTNDPGTGVMRHADAGYDIAVDCAKEQGLDLPMITG</sequence>
<organism>
    <name type="scientific">Pseudomonas putida (strain W619)</name>
    <dbReference type="NCBI Taxonomy" id="390235"/>
    <lineage>
        <taxon>Bacteria</taxon>
        <taxon>Pseudomonadati</taxon>
        <taxon>Pseudomonadota</taxon>
        <taxon>Gammaproteobacteria</taxon>
        <taxon>Pseudomonadales</taxon>
        <taxon>Pseudomonadaceae</taxon>
        <taxon>Pseudomonas</taxon>
    </lineage>
</organism>
<gene>
    <name evidence="1" type="primary">hutU</name>
    <name type="ordered locus">PputW619_0431</name>
</gene>
<proteinExistence type="inferred from homology"/>
<protein>
    <recommendedName>
        <fullName evidence="1">Urocanate hydratase</fullName>
        <shortName evidence="1">Urocanase</shortName>
        <ecNumber evidence="1">4.2.1.49</ecNumber>
    </recommendedName>
    <alternativeName>
        <fullName evidence="1">Imidazolonepropionate hydrolase</fullName>
    </alternativeName>
</protein>
<keyword id="KW-0963">Cytoplasm</keyword>
<keyword id="KW-0369">Histidine metabolism</keyword>
<keyword id="KW-0456">Lyase</keyword>
<keyword id="KW-0520">NAD</keyword>
<evidence type="ECO:0000255" key="1">
    <source>
        <dbReference type="HAMAP-Rule" id="MF_00577"/>
    </source>
</evidence>
<evidence type="ECO:0000256" key="2">
    <source>
        <dbReference type="SAM" id="MobiDB-lite"/>
    </source>
</evidence>
<reference key="1">
    <citation type="submission" date="2008-02" db="EMBL/GenBank/DDBJ databases">
        <title>Complete sequence of Pseudomonas putida W619.</title>
        <authorList>
            <person name="Copeland A."/>
            <person name="Lucas S."/>
            <person name="Lapidus A."/>
            <person name="Barry K."/>
            <person name="Detter J.C."/>
            <person name="Glavina del Rio T."/>
            <person name="Dalin E."/>
            <person name="Tice H."/>
            <person name="Pitluck S."/>
            <person name="Chain P."/>
            <person name="Malfatti S."/>
            <person name="Shin M."/>
            <person name="Vergez L."/>
            <person name="Schmutz J."/>
            <person name="Larimer F."/>
            <person name="Land M."/>
            <person name="Hauser L."/>
            <person name="Kyrpides N."/>
            <person name="Kim E."/>
            <person name="Taghavi S."/>
            <person name="Vangronsveld D."/>
            <person name="van der Lelie D."/>
            <person name="Richardson P."/>
        </authorList>
    </citation>
    <scope>NUCLEOTIDE SEQUENCE [LARGE SCALE GENOMIC DNA]</scope>
    <source>
        <strain>W619</strain>
    </source>
</reference>
<name>HUTU_PSEPW</name>
<accession>B1J2Q5</accession>
<dbReference type="EC" id="4.2.1.49" evidence="1"/>
<dbReference type="EMBL" id="CP000949">
    <property type="protein sequence ID" value="ACA70936.1"/>
    <property type="molecule type" value="Genomic_DNA"/>
</dbReference>
<dbReference type="SMR" id="B1J2Q5"/>
<dbReference type="STRING" id="390235.PputW619_0431"/>
<dbReference type="KEGG" id="ppw:PputW619_0431"/>
<dbReference type="eggNOG" id="COG2987">
    <property type="taxonomic scope" value="Bacteria"/>
</dbReference>
<dbReference type="HOGENOM" id="CLU_018868_0_1_6"/>
<dbReference type="OrthoDB" id="9764874at2"/>
<dbReference type="UniPathway" id="UPA00379">
    <property type="reaction ID" value="UER00550"/>
</dbReference>
<dbReference type="GO" id="GO:0005737">
    <property type="term" value="C:cytoplasm"/>
    <property type="evidence" value="ECO:0007669"/>
    <property type="project" value="UniProtKB-SubCell"/>
</dbReference>
<dbReference type="GO" id="GO:0016153">
    <property type="term" value="F:urocanate hydratase activity"/>
    <property type="evidence" value="ECO:0007669"/>
    <property type="project" value="UniProtKB-UniRule"/>
</dbReference>
<dbReference type="GO" id="GO:0019556">
    <property type="term" value="P:L-histidine catabolic process to glutamate and formamide"/>
    <property type="evidence" value="ECO:0007669"/>
    <property type="project" value="UniProtKB-UniPathway"/>
</dbReference>
<dbReference type="GO" id="GO:0019557">
    <property type="term" value="P:L-histidine catabolic process to glutamate and formate"/>
    <property type="evidence" value="ECO:0007669"/>
    <property type="project" value="UniProtKB-UniPathway"/>
</dbReference>
<dbReference type="FunFam" id="3.40.50.10730:FF:000001">
    <property type="entry name" value="Urocanate hydratase"/>
    <property type="match status" value="1"/>
</dbReference>
<dbReference type="Gene3D" id="3.40.50.10730">
    <property type="entry name" value="Urocanase like domains"/>
    <property type="match status" value="1"/>
</dbReference>
<dbReference type="Gene3D" id="3.40.1770.10">
    <property type="entry name" value="Urocanase superfamily"/>
    <property type="match status" value="1"/>
</dbReference>
<dbReference type="HAMAP" id="MF_00577">
    <property type="entry name" value="HutU"/>
    <property type="match status" value="1"/>
</dbReference>
<dbReference type="InterPro" id="IPR055351">
    <property type="entry name" value="Urocanase"/>
</dbReference>
<dbReference type="InterPro" id="IPR023637">
    <property type="entry name" value="Urocanase-like"/>
</dbReference>
<dbReference type="InterPro" id="IPR035401">
    <property type="entry name" value="Urocanase_C"/>
</dbReference>
<dbReference type="InterPro" id="IPR038364">
    <property type="entry name" value="Urocanase_central_sf"/>
</dbReference>
<dbReference type="InterPro" id="IPR023636">
    <property type="entry name" value="Urocanase_CS"/>
</dbReference>
<dbReference type="InterPro" id="IPR035400">
    <property type="entry name" value="Urocanase_N"/>
</dbReference>
<dbReference type="InterPro" id="IPR035085">
    <property type="entry name" value="Urocanase_Rossmann-like"/>
</dbReference>
<dbReference type="InterPro" id="IPR036190">
    <property type="entry name" value="Urocanase_sf"/>
</dbReference>
<dbReference type="NCBIfam" id="TIGR01228">
    <property type="entry name" value="hutU"/>
    <property type="match status" value="1"/>
</dbReference>
<dbReference type="NCBIfam" id="NF003820">
    <property type="entry name" value="PRK05414.1"/>
    <property type="match status" value="1"/>
</dbReference>
<dbReference type="PANTHER" id="PTHR12216">
    <property type="entry name" value="UROCANATE HYDRATASE"/>
    <property type="match status" value="1"/>
</dbReference>
<dbReference type="PANTHER" id="PTHR12216:SF4">
    <property type="entry name" value="UROCANATE HYDRATASE"/>
    <property type="match status" value="1"/>
</dbReference>
<dbReference type="Pfam" id="PF01175">
    <property type="entry name" value="Urocanase"/>
    <property type="match status" value="1"/>
</dbReference>
<dbReference type="Pfam" id="PF17392">
    <property type="entry name" value="Urocanase_C"/>
    <property type="match status" value="1"/>
</dbReference>
<dbReference type="Pfam" id="PF17391">
    <property type="entry name" value="Urocanase_N"/>
    <property type="match status" value="1"/>
</dbReference>
<dbReference type="PIRSF" id="PIRSF001423">
    <property type="entry name" value="Urocanate_hydrat"/>
    <property type="match status" value="1"/>
</dbReference>
<dbReference type="SUPFAM" id="SSF111326">
    <property type="entry name" value="Urocanase"/>
    <property type="match status" value="1"/>
</dbReference>
<dbReference type="PROSITE" id="PS01233">
    <property type="entry name" value="UROCANASE"/>
    <property type="match status" value="1"/>
</dbReference>
<comment type="function">
    <text evidence="1">Catalyzes the conversion of urocanate to 4-imidazolone-5-propionate.</text>
</comment>
<comment type="catalytic activity">
    <reaction evidence="1">
        <text>4-imidazolone-5-propanoate = trans-urocanate + H2O</text>
        <dbReference type="Rhea" id="RHEA:13101"/>
        <dbReference type="ChEBI" id="CHEBI:15377"/>
        <dbReference type="ChEBI" id="CHEBI:17771"/>
        <dbReference type="ChEBI" id="CHEBI:77893"/>
        <dbReference type="EC" id="4.2.1.49"/>
    </reaction>
</comment>
<comment type="cofactor">
    <cofactor evidence="1">
        <name>NAD(+)</name>
        <dbReference type="ChEBI" id="CHEBI:57540"/>
    </cofactor>
    <text evidence="1">Binds 1 NAD(+) per subunit.</text>
</comment>
<comment type="pathway">
    <text evidence="1">Amino-acid degradation; L-histidine degradation into L-glutamate; N-formimidoyl-L-glutamate from L-histidine: step 2/3.</text>
</comment>
<comment type="subcellular location">
    <subcellularLocation>
        <location evidence="1">Cytoplasm</location>
    </subcellularLocation>
</comment>
<comment type="similarity">
    <text evidence="1">Belongs to the urocanase family.</text>
</comment>
<feature type="chain" id="PRO_1000129568" description="Urocanate hydratase">
    <location>
        <begin position="1"/>
        <end position="557"/>
    </location>
</feature>
<feature type="region of interest" description="Disordered" evidence="2">
    <location>
        <begin position="445"/>
        <end position="464"/>
    </location>
</feature>
<feature type="compositionally biased region" description="Basic and acidic residues" evidence="2">
    <location>
        <begin position="455"/>
        <end position="464"/>
    </location>
</feature>
<feature type="active site" evidence="1">
    <location>
        <position position="411"/>
    </location>
</feature>
<feature type="binding site" evidence="1">
    <location>
        <begin position="53"/>
        <end position="54"/>
    </location>
    <ligand>
        <name>NAD(+)</name>
        <dbReference type="ChEBI" id="CHEBI:57540"/>
    </ligand>
</feature>
<feature type="binding site" evidence="1">
    <location>
        <position position="131"/>
    </location>
    <ligand>
        <name>NAD(+)</name>
        <dbReference type="ChEBI" id="CHEBI:57540"/>
    </ligand>
</feature>
<feature type="binding site" evidence="1">
    <location>
        <begin position="177"/>
        <end position="179"/>
    </location>
    <ligand>
        <name>NAD(+)</name>
        <dbReference type="ChEBI" id="CHEBI:57540"/>
    </ligand>
</feature>
<feature type="binding site" evidence="1">
    <location>
        <position position="197"/>
    </location>
    <ligand>
        <name>NAD(+)</name>
        <dbReference type="ChEBI" id="CHEBI:57540"/>
    </ligand>
</feature>
<feature type="binding site" evidence="1">
    <location>
        <position position="202"/>
    </location>
    <ligand>
        <name>NAD(+)</name>
        <dbReference type="ChEBI" id="CHEBI:57540"/>
    </ligand>
</feature>
<feature type="binding site" evidence="1">
    <location>
        <begin position="243"/>
        <end position="244"/>
    </location>
    <ligand>
        <name>NAD(+)</name>
        <dbReference type="ChEBI" id="CHEBI:57540"/>
    </ligand>
</feature>
<feature type="binding site" evidence="1">
    <location>
        <begin position="264"/>
        <end position="268"/>
    </location>
    <ligand>
        <name>NAD(+)</name>
        <dbReference type="ChEBI" id="CHEBI:57540"/>
    </ligand>
</feature>
<feature type="binding site" evidence="1">
    <location>
        <begin position="274"/>
        <end position="275"/>
    </location>
    <ligand>
        <name>NAD(+)</name>
        <dbReference type="ChEBI" id="CHEBI:57540"/>
    </ligand>
</feature>
<feature type="binding site" evidence="1">
    <location>
        <position position="323"/>
    </location>
    <ligand>
        <name>NAD(+)</name>
        <dbReference type="ChEBI" id="CHEBI:57540"/>
    </ligand>
</feature>
<feature type="binding site" evidence="1">
    <location>
        <position position="493"/>
    </location>
    <ligand>
        <name>NAD(+)</name>
        <dbReference type="ChEBI" id="CHEBI:57540"/>
    </ligand>
</feature>